<accession>Q58299</accession>
<sequence>MVGFMIALSVSSGYLLDNNYSEYSYYILDNDEDFLVFVICDEPNTLKCGFRISEIFSRVFCNAVYNNRYITNLKNLIEVGIYEALENMDKFLKQKGLDYNDLNVSIAGGVYRNGKLMLFSLGNSPVFVVDKDYYLYCPFDLNKNYNLKDWKKFIKFSEVIENPKSVVACSNKLDGKVFKFKNENNKLIAEPFKYRIIQLINSIISNRENIDKIKEELKTDLNLKDNTPLFVASFDEKPINDELVKVGKPKLKVRGCTPILSKKKEETSPHIEPKIIKNMVLAFILILILIFGLFVMLSHNNLNGGNNSDIVNNSSYQVNTSKISIITVNNENKSTNISLNPIQTVKTVSSLNNLDLNNTITKSKNKDSLKILVKFQVGEISKDIKKLPISIMFPEQGYYYISIKSENSNLKLIDVENGEVVYKNTTLIELFEKIDGKEKTYNLIVEYNGSEIPSEKGINISIFEIKIIK</sequence>
<dbReference type="EMBL" id="L77117">
    <property type="protein sequence ID" value="AAB98905.1"/>
    <property type="molecule type" value="Genomic_DNA"/>
</dbReference>
<dbReference type="PIR" id="A64411">
    <property type="entry name" value="A64411"/>
</dbReference>
<dbReference type="SMR" id="Q58299"/>
<dbReference type="STRING" id="243232.MJ_0889"/>
<dbReference type="PaxDb" id="243232-MJ_0889"/>
<dbReference type="EnsemblBacteria" id="AAB98905">
    <property type="protein sequence ID" value="AAB98905"/>
    <property type="gene ID" value="MJ_0889"/>
</dbReference>
<dbReference type="KEGG" id="mja:MJ_0889"/>
<dbReference type="eggNOG" id="arCOG08296">
    <property type="taxonomic scope" value="Archaea"/>
</dbReference>
<dbReference type="HOGENOM" id="CLU_587451_0_0_2"/>
<dbReference type="InParanoid" id="Q58299"/>
<dbReference type="OrthoDB" id="65966at2157"/>
<dbReference type="Proteomes" id="UP000000805">
    <property type="component" value="Chromosome"/>
</dbReference>
<keyword id="KW-1185">Reference proteome</keyword>
<gene>
    <name type="ordered locus">MJ0889</name>
</gene>
<reference key="1">
    <citation type="journal article" date="1996" name="Science">
        <title>Complete genome sequence of the methanogenic archaeon, Methanococcus jannaschii.</title>
        <authorList>
            <person name="Bult C.J."/>
            <person name="White O."/>
            <person name="Olsen G.J."/>
            <person name="Zhou L."/>
            <person name="Fleischmann R.D."/>
            <person name="Sutton G.G."/>
            <person name="Blake J.A."/>
            <person name="FitzGerald L.M."/>
            <person name="Clayton R.A."/>
            <person name="Gocayne J.D."/>
            <person name="Kerlavage A.R."/>
            <person name="Dougherty B.A."/>
            <person name="Tomb J.-F."/>
            <person name="Adams M.D."/>
            <person name="Reich C.I."/>
            <person name="Overbeek R."/>
            <person name="Kirkness E.F."/>
            <person name="Weinstock K.G."/>
            <person name="Merrick J.M."/>
            <person name="Glodek A."/>
            <person name="Scott J.L."/>
            <person name="Geoghagen N.S.M."/>
            <person name="Weidman J.F."/>
            <person name="Fuhrmann J.L."/>
            <person name="Nguyen D."/>
            <person name="Utterback T.R."/>
            <person name="Kelley J.M."/>
            <person name="Peterson J.D."/>
            <person name="Sadow P.W."/>
            <person name="Hanna M.C."/>
            <person name="Cotton M.D."/>
            <person name="Roberts K.M."/>
            <person name="Hurst M.A."/>
            <person name="Kaine B.P."/>
            <person name="Borodovsky M."/>
            <person name="Klenk H.-P."/>
            <person name="Fraser C.M."/>
            <person name="Smith H.O."/>
            <person name="Woese C.R."/>
            <person name="Venter J.C."/>
        </authorList>
    </citation>
    <scope>NUCLEOTIDE SEQUENCE [LARGE SCALE GENOMIC DNA]</scope>
    <source>
        <strain>ATCC 43067 / DSM 2661 / JAL-1 / JCM 10045 / NBRC 100440</strain>
    </source>
</reference>
<proteinExistence type="predicted"/>
<organism>
    <name type="scientific">Methanocaldococcus jannaschii (strain ATCC 43067 / DSM 2661 / JAL-1 / JCM 10045 / NBRC 100440)</name>
    <name type="common">Methanococcus jannaschii</name>
    <dbReference type="NCBI Taxonomy" id="243232"/>
    <lineage>
        <taxon>Archaea</taxon>
        <taxon>Methanobacteriati</taxon>
        <taxon>Methanobacteriota</taxon>
        <taxon>Methanomada group</taxon>
        <taxon>Methanococci</taxon>
        <taxon>Methanococcales</taxon>
        <taxon>Methanocaldococcaceae</taxon>
        <taxon>Methanocaldococcus</taxon>
    </lineage>
</organism>
<name>Y889_METJA</name>
<feature type="chain" id="PRO_0000107093" description="Uncharacterized protein MJ0889">
    <location>
        <begin position="1"/>
        <end position="469"/>
    </location>
</feature>
<protein>
    <recommendedName>
        <fullName>Uncharacterized protein MJ0889</fullName>
    </recommendedName>
</protein>